<sequence length="144" mass="15756">MVRERTKKLRGGHYGRGFKAGRGKGKKGGSGNAGMGKHKWIWMVKYDPLHFGGKGFTSHHISQVEVPINLGDVEYMYESLKRDGFVREENGEIIVDLRAAGYDKLLGNGNFTVKSTIIIDKATEKAISKLSAIGSKIENDGSSA</sequence>
<accession>Q9HIS9</accession>
<name>RL15_THEAC</name>
<feature type="chain" id="PRO_0000104876" description="Large ribosomal subunit protein uL15">
    <location>
        <begin position="1"/>
        <end position="144"/>
    </location>
</feature>
<feature type="region of interest" description="Disordered" evidence="2">
    <location>
        <begin position="1"/>
        <end position="32"/>
    </location>
</feature>
<feature type="compositionally biased region" description="Basic residues" evidence="2">
    <location>
        <begin position="1"/>
        <end position="13"/>
    </location>
</feature>
<dbReference type="EMBL" id="AL445067">
    <property type="protein sequence ID" value="CAC12373.1"/>
    <property type="molecule type" value="Genomic_DNA"/>
</dbReference>
<dbReference type="RefSeq" id="WP_010901656.1">
    <property type="nucleotide sequence ID" value="NC_002578.1"/>
</dbReference>
<dbReference type="SMR" id="Q9HIS9"/>
<dbReference type="FunCoup" id="Q9HIS9">
    <property type="interactions" value="152"/>
</dbReference>
<dbReference type="STRING" id="273075.gene:9572472"/>
<dbReference type="PaxDb" id="273075-Ta1249"/>
<dbReference type="EnsemblBacteria" id="CAC12373">
    <property type="protein sequence ID" value="CAC12373"/>
    <property type="gene ID" value="CAC12373"/>
</dbReference>
<dbReference type="KEGG" id="tac:Ta1249"/>
<dbReference type="eggNOG" id="arCOG00779">
    <property type="taxonomic scope" value="Archaea"/>
</dbReference>
<dbReference type="HOGENOM" id="CLU_109163_0_0_2"/>
<dbReference type="InParanoid" id="Q9HIS9"/>
<dbReference type="OrthoDB" id="9418at2157"/>
<dbReference type="Proteomes" id="UP000001024">
    <property type="component" value="Chromosome"/>
</dbReference>
<dbReference type="GO" id="GO:0022625">
    <property type="term" value="C:cytosolic large ribosomal subunit"/>
    <property type="evidence" value="ECO:0007669"/>
    <property type="project" value="TreeGrafter"/>
</dbReference>
<dbReference type="GO" id="GO:0019843">
    <property type="term" value="F:rRNA binding"/>
    <property type="evidence" value="ECO:0007669"/>
    <property type="project" value="UniProtKB-UniRule"/>
</dbReference>
<dbReference type="GO" id="GO:0003735">
    <property type="term" value="F:structural constituent of ribosome"/>
    <property type="evidence" value="ECO:0007669"/>
    <property type="project" value="InterPro"/>
</dbReference>
<dbReference type="GO" id="GO:0006412">
    <property type="term" value="P:translation"/>
    <property type="evidence" value="ECO:0007669"/>
    <property type="project" value="UniProtKB-UniRule"/>
</dbReference>
<dbReference type="Gene3D" id="3.100.10.10">
    <property type="match status" value="1"/>
</dbReference>
<dbReference type="Gene3D" id="4.10.990.10">
    <property type="match status" value="1"/>
</dbReference>
<dbReference type="HAMAP" id="MF_01341">
    <property type="entry name" value="Ribosomal_uL15"/>
    <property type="match status" value="1"/>
</dbReference>
<dbReference type="InterPro" id="IPR027386">
    <property type="entry name" value="Rbsml_uL15_N"/>
</dbReference>
<dbReference type="InterPro" id="IPR030878">
    <property type="entry name" value="Ribosomal_uL15"/>
</dbReference>
<dbReference type="InterPro" id="IPR021131">
    <property type="entry name" value="Ribosomal_uL15/eL18"/>
</dbReference>
<dbReference type="InterPro" id="IPR036227">
    <property type="entry name" value="Ribosomal_uL15/eL18_sf"/>
</dbReference>
<dbReference type="PANTHER" id="PTHR11721">
    <property type="entry name" value="60S RIBOSOMAL PROTEIN L27A"/>
    <property type="match status" value="1"/>
</dbReference>
<dbReference type="PANTHER" id="PTHR11721:SF3">
    <property type="entry name" value="LARGE RIBOSOMAL SUBUNIT PROTEIN UL15"/>
    <property type="match status" value="1"/>
</dbReference>
<dbReference type="Pfam" id="PF00828">
    <property type="entry name" value="Ribosomal_L27A"/>
    <property type="match status" value="1"/>
</dbReference>
<dbReference type="SUPFAM" id="SSF52080">
    <property type="entry name" value="Ribosomal proteins L15p and L18e"/>
    <property type="match status" value="1"/>
</dbReference>
<comment type="function">
    <text evidence="1">Binds to the 23S rRNA.</text>
</comment>
<comment type="subunit">
    <text evidence="1">Part of the 50S ribosomal subunit.</text>
</comment>
<comment type="similarity">
    <text evidence="1">Belongs to the universal ribosomal protein uL15 family.</text>
</comment>
<protein>
    <recommendedName>
        <fullName evidence="1">Large ribosomal subunit protein uL15</fullName>
    </recommendedName>
    <alternativeName>
        <fullName evidence="3">50S ribosomal protein L15</fullName>
    </alternativeName>
</protein>
<proteinExistence type="inferred from homology"/>
<organism>
    <name type="scientific">Thermoplasma acidophilum (strain ATCC 25905 / DSM 1728 / JCM 9062 / NBRC 15155 / AMRC-C165)</name>
    <dbReference type="NCBI Taxonomy" id="273075"/>
    <lineage>
        <taxon>Archaea</taxon>
        <taxon>Methanobacteriati</taxon>
        <taxon>Thermoplasmatota</taxon>
        <taxon>Thermoplasmata</taxon>
        <taxon>Thermoplasmatales</taxon>
        <taxon>Thermoplasmataceae</taxon>
        <taxon>Thermoplasma</taxon>
    </lineage>
</organism>
<keyword id="KW-1185">Reference proteome</keyword>
<keyword id="KW-0687">Ribonucleoprotein</keyword>
<keyword id="KW-0689">Ribosomal protein</keyword>
<keyword id="KW-0694">RNA-binding</keyword>
<keyword id="KW-0699">rRNA-binding</keyword>
<reference key="1">
    <citation type="journal article" date="2000" name="Nature">
        <title>The genome sequence of the thermoacidophilic scavenger Thermoplasma acidophilum.</title>
        <authorList>
            <person name="Ruepp A."/>
            <person name="Graml W."/>
            <person name="Santos-Martinez M.-L."/>
            <person name="Koretke K.K."/>
            <person name="Volker C."/>
            <person name="Mewes H.-W."/>
            <person name="Frishman D."/>
            <person name="Stocker S."/>
            <person name="Lupas A.N."/>
            <person name="Baumeister W."/>
        </authorList>
    </citation>
    <scope>NUCLEOTIDE SEQUENCE [LARGE SCALE GENOMIC DNA]</scope>
    <source>
        <strain>ATCC 25905 / DSM 1728 / JCM 9062 / NBRC 15155 / AMRC-C165</strain>
    </source>
</reference>
<evidence type="ECO:0000255" key="1">
    <source>
        <dbReference type="HAMAP-Rule" id="MF_01341"/>
    </source>
</evidence>
<evidence type="ECO:0000256" key="2">
    <source>
        <dbReference type="SAM" id="MobiDB-lite"/>
    </source>
</evidence>
<evidence type="ECO:0000305" key="3"/>
<gene>
    <name evidence="1" type="primary">rpl15</name>
    <name type="ordered locus">Ta1249</name>
</gene>